<protein>
    <recommendedName>
        <fullName evidence="1">ATP synthase subunit b</fullName>
    </recommendedName>
    <alternativeName>
        <fullName evidence="1">ATP synthase F(0) sector subunit b</fullName>
    </alternativeName>
    <alternativeName>
        <fullName evidence="1">ATPase subunit I</fullName>
    </alternativeName>
    <alternativeName>
        <fullName evidence="1">F-type ATPase subunit b</fullName>
        <shortName evidence="1">F-ATPase subunit b</shortName>
    </alternativeName>
</protein>
<reference key="1">
    <citation type="journal article" date="2006" name="Environ. Microbiol.">
        <title>Whole genome analysis of the marine Bacteroidetes'Gramella forsetii' reveals adaptations to degradation of polymeric organic matter.</title>
        <authorList>
            <person name="Bauer M."/>
            <person name="Kube M."/>
            <person name="Teeling H."/>
            <person name="Richter M."/>
            <person name="Lombardot T."/>
            <person name="Allers E."/>
            <person name="Wuerdemann C.A."/>
            <person name="Quast C."/>
            <person name="Kuhl H."/>
            <person name="Knaust F."/>
            <person name="Woebken D."/>
            <person name="Bischof K."/>
            <person name="Mussmann M."/>
            <person name="Choudhuri J.V."/>
            <person name="Meyer F."/>
            <person name="Reinhardt R."/>
            <person name="Amann R.I."/>
            <person name="Gloeckner F.O."/>
        </authorList>
    </citation>
    <scope>NUCLEOTIDE SEQUENCE [LARGE SCALE GENOMIC DNA]</scope>
    <source>
        <strain>DSM 17595 / CGMCC 1.15422 / KT0803</strain>
    </source>
</reference>
<evidence type="ECO:0000255" key="1">
    <source>
        <dbReference type="HAMAP-Rule" id="MF_01398"/>
    </source>
</evidence>
<keyword id="KW-0066">ATP synthesis</keyword>
<keyword id="KW-1003">Cell membrane</keyword>
<keyword id="KW-0138">CF(0)</keyword>
<keyword id="KW-0375">Hydrogen ion transport</keyword>
<keyword id="KW-0406">Ion transport</keyword>
<keyword id="KW-0472">Membrane</keyword>
<keyword id="KW-0812">Transmembrane</keyword>
<keyword id="KW-1133">Transmembrane helix</keyword>
<keyword id="KW-0813">Transport</keyword>
<gene>
    <name evidence="1" type="primary">atpF</name>
    <name type="ordered locus">GFO_3268</name>
</gene>
<proteinExistence type="inferred from homology"/>
<comment type="function">
    <text evidence="1">F(1)F(0) ATP synthase produces ATP from ADP in the presence of a proton or sodium gradient. F-type ATPases consist of two structural domains, F(1) containing the extramembraneous catalytic core and F(0) containing the membrane proton channel, linked together by a central stalk and a peripheral stalk. During catalysis, ATP synthesis in the catalytic domain of F(1) is coupled via a rotary mechanism of the central stalk subunits to proton translocation.</text>
</comment>
<comment type="function">
    <text evidence="1">Component of the F(0) channel, it forms part of the peripheral stalk, linking F(1) to F(0).</text>
</comment>
<comment type="subunit">
    <text evidence="1">F-type ATPases have 2 components, F(1) - the catalytic core - and F(0) - the membrane proton channel. F(1) has five subunits: alpha(3), beta(3), gamma(1), delta(1), epsilon(1). F(0) has three main subunits: a(1), b(2) and c(10-14). The alpha and beta chains form an alternating ring which encloses part of the gamma chain. F(1) is attached to F(0) by a central stalk formed by the gamma and epsilon chains, while a peripheral stalk is formed by the delta and b chains.</text>
</comment>
<comment type="subcellular location">
    <subcellularLocation>
        <location evidence="1">Cell membrane</location>
        <topology evidence="1">Single-pass membrane protein</topology>
    </subcellularLocation>
</comment>
<comment type="similarity">
    <text evidence="1">Belongs to the ATPase B chain family.</text>
</comment>
<name>ATPF_CHRFK</name>
<sequence length="164" mass="18660">MDLITPEIGLFFWQTIVFLILLFLMAKFAWKPILGSVRNREQSINDALASAEKARKEMQNLQSDNEQLLKEARAERDAILKEARELKEKVITDASDEAKVKADKIVADAKRSIELEKQSAMAELKNHVAELSVEIAEKIVRKELSGKNEQHQMIEKMIGDAKLN</sequence>
<organism>
    <name type="scientific">Christiangramia forsetii (strain DSM 17595 / CGMCC 1.15422 / KT0803)</name>
    <name type="common">Gramella forsetii</name>
    <dbReference type="NCBI Taxonomy" id="411154"/>
    <lineage>
        <taxon>Bacteria</taxon>
        <taxon>Pseudomonadati</taxon>
        <taxon>Bacteroidota</taxon>
        <taxon>Flavobacteriia</taxon>
        <taxon>Flavobacteriales</taxon>
        <taxon>Flavobacteriaceae</taxon>
        <taxon>Christiangramia</taxon>
    </lineage>
</organism>
<accession>A0M6G6</accession>
<dbReference type="EMBL" id="CU207366">
    <property type="protein sequence ID" value="CAL68211.1"/>
    <property type="molecule type" value="Genomic_DNA"/>
</dbReference>
<dbReference type="RefSeq" id="WP_011711112.1">
    <property type="nucleotide sequence ID" value="NC_008571.1"/>
</dbReference>
<dbReference type="SMR" id="A0M6G6"/>
<dbReference type="STRING" id="411154.GFO_3268"/>
<dbReference type="KEGG" id="gfo:GFO_3268"/>
<dbReference type="eggNOG" id="COG0711">
    <property type="taxonomic scope" value="Bacteria"/>
</dbReference>
<dbReference type="HOGENOM" id="CLU_079215_4_1_10"/>
<dbReference type="OrthoDB" id="9795289at2"/>
<dbReference type="Proteomes" id="UP000000755">
    <property type="component" value="Chromosome"/>
</dbReference>
<dbReference type="GO" id="GO:0005886">
    <property type="term" value="C:plasma membrane"/>
    <property type="evidence" value="ECO:0007669"/>
    <property type="project" value="UniProtKB-SubCell"/>
</dbReference>
<dbReference type="GO" id="GO:0045259">
    <property type="term" value="C:proton-transporting ATP synthase complex"/>
    <property type="evidence" value="ECO:0007669"/>
    <property type="project" value="UniProtKB-KW"/>
</dbReference>
<dbReference type="GO" id="GO:0046933">
    <property type="term" value="F:proton-transporting ATP synthase activity, rotational mechanism"/>
    <property type="evidence" value="ECO:0007669"/>
    <property type="project" value="UniProtKB-UniRule"/>
</dbReference>
<dbReference type="GO" id="GO:0046961">
    <property type="term" value="F:proton-transporting ATPase activity, rotational mechanism"/>
    <property type="evidence" value="ECO:0007669"/>
    <property type="project" value="TreeGrafter"/>
</dbReference>
<dbReference type="CDD" id="cd06503">
    <property type="entry name" value="ATP-synt_Fo_b"/>
    <property type="match status" value="1"/>
</dbReference>
<dbReference type="Gene3D" id="1.20.5.620">
    <property type="entry name" value="F1F0 ATP synthase subunit B, membrane domain"/>
    <property type="match status" value="1"/>
</dbReference>
<dbReference type="HAMAP" id="MF_01398">
    <property type="entry name" value="ATP_synth_b_bprime"/>
    <property type="match status" value="1"/>
</dbReference>
<dbReference type="InterPro" id="IPR028987">
    <property type="entry name" value="ATP_synth_B-like_membr_sf"/>
</dbReference>
<dbReference type="InterPro" id="IPR002146">
    <property type="entry name" value="ATP_synth_b/b'su_bac/chlpt"/>
</dbReference>
<dbReference type="InterPro" id="IPR005864">
    <property type="entry name" value="ATP_synth_F0_bsu_bac"/>
</dbReference>
<dbReference type="InterPro" id="IPR050059">
    <property type="entry name" value="ATP_synthase_B_chain"/>
</dbReference>
<dbReference type="NCBIfam" id="TIGR01144">
    <property type="entry name" value="ATP_synt_b"/>
    <property type="match status" value="1"/>
</dbReference>
<dbReference type="NCBIfam" id="NF011041">
    <property type="entry name" value="PRK14471.1"/>
    <property type="match status" value="1"/>
</dbReference>
<dbReference type="PANTHER" id="PTHR33445:SF1">
    <property type="entry name" value="ATP SYNTHASE SUBUNIT B"/>
    <property type="match status" value="1"/>
</dbReference>
<dbReference type="PANTHER" id="PTHR33445">
    <property type="entry name" value="ATP SYNTHASE SUBUNIT B', CHLOROPLASTIC"/>
    <property type="match status" value="1"/>
</dbReference>
<dbReference type="Pfam" id="PF00430">
    <property type="entry name" value="ATP-synt_B"/>
    <property type="match status" value="1"/>
</dbReference>
<dbReference type="SUPFAM" id="SSF81573">
    <property type="entry name" value="F1F0 ATP synthase subunit B, membrane domain"/>
    <property type="match status" value="1"/>
</dbReference>
<feature type="chain" id="PRO_0000368508" description="ATP synthase subunit b">
    <location>
        <begin position="1"/>
        <end position="164"/>
    </location>
</feature>
<feature type="transmembrane region" description="Helical" evidence="1">
    <location>
        <begin position="8"/>
        <end position="28"/>
    </location>
</feature>